<proteinExistence type="inferred from homology"/>
<protein>
    <recommendedName>
        <fullName>Chitin synthase export chaperone</fullName>
    </recommendedName>
</protein>
<name>CHS7_CANAL</name>
<accession>Q5AA40</accession>
<accession>A0A1D8PDP7</accession>
<keyword id="KW-0961">Cell wall biogenesis/degradation</keyword>
<keyword id="KW-0256">Endoplasmic reticulum</keyword>
<keyword id="KW-0472">Membrane</keyword>
<keyword id="KW-0653">Protein transport</keyword>
<keyword id="KW-1185">Reference proteome</keyword>
<keyword id="KW-0812">Transmembrane</keyword>
<keyword id="KW-1133">Transmembrane helix</keyword>
<keyword id="KW-0813">Transport</keyword>
<organism>
    <name type="scientific">Candida albicans (strain SC5314 / ATCC MYA-2876)</name>
    <name type="common">Yeast</name>
    <dbReference type="NCBI Taxonomy" id="237561"/>
    <lineage>
        <taxon>Eukaryota</taxon>
        <taxon>Fungi</taxon>
        <taxon>Dikarya</taxon>
        <taxon>Ascomycota</taxon>
        <taxon>Saccharomycotina</taxon>
        <taxon>Pichiomycetes</taxon>
        <taxon>Debaryomycetaceae</taxon>
        <taxon>Candida/Lodderomyces clade</taxon>
        <taxon>Candida</taxon>
    </lineage>
</organism>
<gene>
    <name type="primary">CHS7</name>
    <name type="ordered locus">CAALFM_C106010WA</name>
    <name type="ORF">CaO19.2444</name>
    <name type="ORF">CaO19.9980</name>
</gene>
<sequence length="310" mass="34709">MSFGSFDHICNKTALPLCSVVGAVNQSAFFQRGIVPDCYARSVELANTMIFQIGNAFVHFGGLIILLIIIFNVRAKYTAIGRKEMLFFLYLAIGLIVSSLIVDCGVSPPSSTSYAYFVAVQIGLSSALCICLLYNGFLCFQFWEDGTSRSMWILRVGCFAWFAVNFIVCIITFKHWDTALDYRKTTTLFIFAYVLNAVILAVYVVSQIILVVFALESYWSLGAILLGVFFFVAGQVLTYVFSDKICRGASHYVDGLFFGSACNVFTFMMIYKFWDMITSDDLEFSVANVEQPINEFGVGADDEKRSSMFF</sequence>
<evidence type="ECO:0000250" key="1"/>
<evidence type="ECO:0000255" key="2"/>
<evidence type="ECO:0000305" key="3"/>
<feature type="chain" id="PRO_0000280571" description="Chitin synthase export chaperone">
    <location>
        <begin position="1"/>
        <end position="310"/>
    </location>
</feature>
<feature type="transmembrane region" description="Helical" evidence="2">
    <location>
        <begin position="50"/>
        <end position="70"/>
    </location>
</feature>
<feature type="transmembrane region" description="Helical" evidence="2">
    <location>
        <begin position="86"/>
        <end position="106"/>
    </location>
</feature>
<feature type="transmembrane region" description="Helical" evidence="2">
    <location>
        <begin position="114"/>
        <end position="134"/>
    </location>
</feature>
<feature type="transmembrane region" description="Helical" evidence="2">
    <location>
        <begin position="151"/>
        <end position="171"/>
    </location>
</feature>
<feature type="transmembrane region" description="Helical" evidence="2">
    <location>
        <begin position="194"/>
        <end position="214"/>
    </location>
</feature>
<feature type="transmembrane region" description="Helical" evidence="2">
    <location>
        <begin position="221"/>
        <end position="241"/>
    </location>
</feature>
<feature type="transmembrane region" description="Helical" evidence="2">
    <location>
        <begin position="257"/>
        <end position="277"/>
    </location>
</feature>
<reference key="1">
    <citation type="journal article" date="2004" name="Proc. Natl. Acad. Sci. U.S.A.">
        <title>The diploid genome sequence of Candida albicans.</title>
        <authorList>
            <person name="Jones T."/>
            <person name="Federspiel N.A."/>
            <person name="Chibana H."/>
            <person name="Dungan J."/>
            <person name="Kalman S."/>
            <person name="Magee B.B."/>
            <person name="Newport G."/>
            <person name="Thorstenson Y.R."/>
            <person name="Agabian N."/>
            <person name="Magee P.T."/>
            <person name="Davis R.W."/>
            <person name="Scherer S."/>
        </authorList>
    </citation>
    <scope>NUCLEOTIDE SEQUENCE [LARGE SCALE GENOMIC DNA]</scope>
    <source>
        <strain>SC5314 / ATCC MYA-2876</strain>
    </source>
</reference>
<reference key="2">
    <citation type="journal article" date="2007" name="Genome Biol.">
        <title>Assembly of the Candida albicans genome into sixteen supercontigs aligned on the eight chromosomes.</title>
        <authorList>
            <person name="van het Hoog M."/>
            <person name="Rast T.J."/>
            <person name="Martchenko M."/>
            <person name="Grindle S."/>
            <person name="Dignard D."/>
            <person name="Hogues H."/>
            <person name="Cuomo C."/>
            <person name="Berriman M."/>
            <person name="Scherer S."/>
            <person name="Magee B.B."/>
            <person name="Whiteway M."/>
            <person name="Chibana H."/>
            <person name="Nantel A."/>
            <person name="Magee P.T."/>
        </authorList>
    </citation>
    <scope>GENOME REANNOTATION</scope>
    <source>
        <strain>SC5314 / ATCC MYA-2876</strain>
    </source>
</reference>
<reference key="3">
    <citation type="journal article" date="2013" name="Genome Biol.">
        <title>Assembly of a phased diploid Candida albicans genome facilitates allele-specific measurements and provides a simple model for repeat and indel structure.</title>
        <authorList>
            <person name="Muzzey D."/>
            <person name="Schwartz K."/>
            <person name="Weissman J.S."/>
            <person name="Sherlock G."/>
        </authorList>
    </citation>
    <scope>NUCLEOTIDE SEQUENCE [LARGE SCALE GENOMIC DNA]</scope>
    <scope>GENOME REANNOTATION</scope>
    <source>
        <strain>SC5314 / ATCC MYA-2876</strain>
    </source>
</reference>
<comment type="function">
    <text evidence="1">Chaperone required for the export of the chitin synthase CHS3 from the endoplasmic reticulum.</text>
</comment>
<comment type="subunit">
    <text evidence="1">Interacts with CHS3.</text>
</comment>
<comment type="subcellular location">
    <subcellularLocation>
        <location evidence="1">Endoplasmic reticulum membrane</location>
        <topology evidence="1">Multi-pass membrane protein</topology>
    </subcellularLocation>
</comment>
<comment type="similarity">
    <text evidence="3">Belongs to the CHS7 family.</text>
</comment>
<dbReference type="EMBL" id="CP017623">
    <property type="protein sequence ID" value="AOW26265.1"/>
    <property type="molecule type" value="Genomic_DNA"/>
</dbReference>
<dbReference type="RefSeq" id="XP_718467.1">
    <property type="nucleotide sequence ID" value="XM_713374.1"/>
</dbReference>
<dbReference type="SMR" id="Q5AA40"/>
<dbReference type="FunCoup" id="Q5AA40">
    <property type="interactions" value="67"/>
</dbReference>
<dbReference type="STRING" id="237561.Q5AA40"/>
<dbReference type="EnsemblFungi" id="C1_06010W_A-T">
    <property type="protein sequence ID" value="C1_06010W_A-T-p1"/>
    <property type="gene ID" value="C1_06010W_A"/>
</dbReference>
<dbReference type="GeneID" id="3639869"/>
<dbReference type="KEGG" id="cal:CAALFM_C106010WA"/>
<dbReference type="CGD" id="CAL0000175393">
    <property type="gene designation" value="CHS7"/>
</dbReference>
<dbReference type="VEuPathDB" id="FungiDB:C1_06010W_A"/>
<dbReference type="eggNOG" id="ENOG502QRVH">
    <property type="taxonomic scope" value="Eukaryota"/>
</dbReference>
<dbReference type="HOGENOM" id="CLU_050424_1_1_1"/>
<dbReference type="InParanoid" id="Q5AA40"/>
<dbReference type="OMA" id="TVWEVKD"/>
<dbReference type="OrthoDB" id="2189463at2759"/>
<dbReference type="PHI-base" id="PHI:484"/>
<dbReference type="PRO" id="PR:Q5AA40"/>
<dbReference type="Proteomes" id="UP000000559">
    <property type="component" value="Chromosome 1"/>
</dbReference>
<dbReference type="GO" id="GO:0005789">
    <property type="term" value="C:endoplasmic reticulum membrane"/>
    <property type="evidence" value="ECO:0000318"/>
    <property type="project" value="GO_Central"/>
</dbReference>
<dbReference type="GO" id="GO:0051082">
    <property type="term" value="F:unfolded protein binding"/>
    <property type="evidence" value="ECO:0000318"/>
    <property type="project" value="GO_Central"/>
</dbReference>
<dbReference type="GO" id="GO:0071555">
    <property type="term" value="P:cell wall organization"/>
    <property type="evidence" value="ECO:0007669"/>
    <property type="project" value="UniProtKB-KW"/>
</dbReference>
<dbReference type="GO" id="GO:0006031">
    <property type="term" value="P:chitin biosynthetic process"/>
    <property type="evidence" value="ECO:0000315"/>
    <property type="project" value="CGD"/>
</dbReference>
<dbReference type="GO" id="GO:0006888">
    <property type="term" value="P:endoplasmic reticulum to Golgi vesicle-mediated transport"/>
    <property type="evidence" value="ECO:0000250"/>
    <property type="project" value="CGD"/>
</dbReference>
<dbReference type="GO" id="GO:0030447">
    <property type="term" value="P:filamentous growth"/>
    <property type="evidence" value="ECO:0000315"/>
    <property type="project" value="CGD"/>
</dbReference>
<dbReference type="GO" id="GO:0044182">
    <property type="term" value="P:filamentous growth of a population of unicellular organisms"/>
    <property type="evidence" value="ECO:0000315"/>
    <property type="project" value="CGD"/>
</dbReference>
<dbReference type="GO" id="GO:0000128">
    <property type="term" value="P:flocculation"/>
    <property type="evidence" value="ECO:0000315"/>
    <property type="project" value="CGD"/>
</dbReference>
<dbReference type="GO" id="GO:1900429">
    <property type="term" value="P:negative regulation of filamentous growth of a population of unicellular organisms"/>
    <property type="evidence" value="ECO:0000315"/>
    <property type="project" value="CGD"/>
</dbReference>
<dbReference type="GO" id="GO:0060257">
    <property type="term" value="P:negative regulation of flocculation"/>
    <property type="evidence" value="ECO:0000315"/>
    <property type="project" value="CGD"/>
</dbReference>
<dbReference type="GO" id="GO:0006457">
    <property type="term" value="P:protein folding"/>
    <property type="evidence" value="ECO:0000318"/>
    <property type="project" value="GO_Central"/>
</dbReference>
<dbReference type="GO" id="GO:0015031">
    <property type="term" value="P:protein transport"/>
    <property type="evidence" value="ECO:0007669"/>
    <property type="project" value="UniProtKB-KW"/>
</dbReference>
<dbReference type="GO" id="GO:0051223">
    <property type="term" value="P:regulation of protein transport"/>
    <property type="evidence" value="ECO:0000250"/>
    <property type="project" value="CGD"/>
</dbReference>
<dbReference type="InterPro" id="IPR022057">
    <property type="entry name" value="Chs7"/>
</dbReference>
<dbReference type="PANTHER" id="PTHR35329">
    <property type="entry name" value="CHITIN SYNTHASE EXPORT CHAPERONE"/>
    <property type="match status" value="1"/>
</dbReference>
<dbReference type="PANTHER" id="PTHR35329:SF2">
    <property type="entry name" value="CHITIN SYNTHASE EXPORT CHAPERONE"/>
    <property type="match status" value="1"/>
</dbReference>
<dbReference type="Pfam" id="PF12271">
    <property type="entry name" value="Chs7"/>
    <property type="match status" value="1"/>
</dbReference>